<keyword id="KW-0406">Ion transport</keyword>
<keyword id="KW-0460">Magnesium</keyword>
<keyword id="KW-0472">Membrane</keyword>
<keyword id="KW-1185">Reference proteome</keyword>
<keyword id="KW-0812">Transmembrane</keyword>
<keyword id="KW-1133">Transmembrane helix</keyword>
<keyword id="KW-0813">Transport</keyword>
<evidence type="ECO:0000250" key="1"/>
<evidence type="ECO:0000255" key="2"/>
<evidence type="ECO:0000256" key="3">
    <source>
        <dbReference type="SAM" id="MobiDB-lite"/>
    </source>
</evidence>
<evidence type="ECO:0000305" key="4"/>
<accession>A2Z9W7</accession>
<name>MRS2G_ORYSI</name>
<dbReference type="EMBL" id="CM000135">
    <property type="protein sequence ID" value="EAY79401.1"/>
    <property type="status" value="ALT_SEQ"/>
    <property type="molecule type" value="Genomic_DNA"/>
</dbReference>
<dbReference type="SMR" id="A2Z9W7"/>
<dbReference type="STRING" id="39946.A2Z9W7"/>
<dbReference type="EnsemblPlants" id="OsGoSa_10g0018990.01">
    <property type="protein sequence ID" value="OsGoSa_10g0018990.01"/>
    <property type="gene ID" value="OsGoSa_10g0018990"/>
</dbReference>
<dbReference type="EnsemblPlants" id="OsIR64_10g0018780.01">
    <property type="protein sequence ID" value="OsIR64_10g0018780.01"/>
    <property type="gene ID" value="OsIR64_10g0018780"/>
</dbReference>
<dbReference type="EnsemblPlants" id="OsIR64_10g0018780.03">
    <property type="protein sequence ID" value="OsIR64_10g0018780.03"/>
    <property type="gene ID" value="OsIR64_10g0018780"/>
</dbReference>
<dbReference type="EnsemblPlants" id="OsKYG_10g0018470.01">
    <property type="protein sequence ID" value="OsKYG_10g0018470.01"/>
    <property type="gene ID" value="OsKYG_10g0018470"/>
</dbReference>
<dbReference type="EnsemblPlants" id="OsLaMu_10g0019090.01">
    <property type="protein sequence ID" value="OsLaMu_10g0019090.01"/>
    <property type="gene ID" value="OsLaMu_10g0019090"/>
</dbReference>
<dbReference type="EnsemblPlants" id="OsLaMu_10g0019090.03">
    <property type="protein sequence ID" value="OsLaMu_10g0019090.03"/>
    <property type="gene ID" value="OsLaMu_10g0019090"/>
</dbReference>
<dbReference type="EnsemblPlants" id="OsLima_10g0018530.01">
    <property type="protein sequence ID" value="OsLima_10g0018530.01"/>
    <property type="gene ID" value="OsLima_10g0018530"/>
</dbReference>
<dbReference type="EnsemblPlants" id="OsLiXu_10g0018580.01">
    <property type="protein sequence ID" value="OsLiXu_10g0018580.01"/>
    <property type="gene ID" value="OsLiXu_10g0018580"/>
</dbReference>
<dbReference type="EnsemblPlants" id="OsMH63_10G018720_01">
    <property type="protein sequence ID" value="OsMH63_10G018720_01"/>
    <property type="gene ID" value="OsMH63_10G018720"/>
</dbReference>
<dbReference type="EnsemblPlants" id="OsPr106_10g0018920.02">
    <property type="protein sequence ID" value="OsPr106_10g0018920.02"/>
    <property type="gene ID" value="OsPr106_10g0018920"/>
</dbReference>
<dbReference type="EnsemblPlants" id="OsZS97_10G018820_01">
    <property type="protein sequence ID" value="OsZS97_10G018820_01"/>
    <property type="gene ID" value="OsZS97_10G018820"/>
</dbReference>
<dbReference type="Gramene" id="OsGoSa_10g0018990.01">
    <property type="protein sequence ID" value="OsGoSa_10g0018990.01"/>
    <property type="gene ID" value="OsGoSa_10g0018990"/>
</dbReference>
<dbReference type="Gramene" id="OsIR64_10g0018780.01">
    <property type="protein sequence ID" value="OsIR64_10g0018780.01"/>
    <property type="gene ID" value="OsIR64_10g0018780"/>
</dbReference>
<dbReference type="Gramene" id="OsIR64_10g0018780.03">
    <property type="protein sequence ID" value="OsIR64_10g0018780.03"/>
    <property type="gene ID" value="OsIR64_10g0018780"/>
</dbReference>
<dbReference type="Gramene" id="OsKYG_10g0018470.01">
    <property type="protein sequence ID" value="OsKYG_10g0018470.01"/>
    <property type="gene ID" value="OsKYG_10g0018470"/>
</dbReference>
<dbReference type="Gramene" id="OsLaMu_10g0019090.01">
    <property type="protein sequence ID" value="OsLaMu_10g0019090.01"/>
    <property type="gene ID" value="OsLaMu_10g0019090"/>
</dbReference>
<dbReference type="Gramene" id="OsLaMu_10g0019090.03">
    <property type="protein sequence ID" value="OsLaMu_10g0019090.03"/>
    <property type="gene ID" value="OsLaMu_10g0019090"/>
</dbReference>
<dbReference type="Gramene" id="OsLima_10g0018530.01">
    <property type="protein sequence ID" value="OsLima_10g0018530.01"/>
    <property type="gene ID" value="OsLima_10g0018530"/>
</dbReference>
<dbReference type="Gramene" id="OsLiXu_10g0018580.01">
    <property type="protein sequence ID" value="OsLiXu_10g0018580.01"/>
    <property type="gene ID" value="OsLiXu_10g0018580"/>
</dbReference>
<dbReference type="Gramene" id="OsMH63_10G018720_01">
    <property type="protein sequence ID" value="OsMH63_10G018720_01"/>
    <property type="gene ID" value="OsMH63_10G018720"/>
</dbReference>
<dbReference type="Gramene" id="OsPr106_10g0018920.02">
    <property type="protein sequence ID" value="OsPr106_10g0018920.02"/>
    <property type="gene ID" value="OsPr106_10g0018920"/>
</dbReference>
<dbReference type="Gramene" id="OsZS97_10G018820_01">
    <property type="protein sequence ID" value="OsZS97_10G018820_01"/>
    <property type="gene ID" value="OsZS97_10G018820"/>
</dbReference>
<dbReference type="HOGENOM" id="CLU_034694_1_0_1"/>
<dbReference type="OrthoDB" id="10251508at2759"/>
<dbReference type="Proteomes" id="UP000007015">
    <property type="component" value="Chromosome 10"/>
</dbReference>
<dbReference type="GO" id="GO:0016020">
    <property type="term" value="C:membrane"/>
    <property type="evidence" value="ECO:0007669"/>
    <property type="project" value="UniProtKB-SubCell"/>
</dbReference>
<dbReference type="GO" id="GO:0015095">
    <property type="term" value="F:magnesium ion transmembrane transporter activity"/>
    <property type="evidence" value="ECO:0007669"/>
    <property type="project" value="UniProtKB-ARBA"/>
</dbReference>
<dbReference type="CDD" id="cd12823">
    <property type="entry name" value="Mrs2_Mfm1p-like"/>
    <property type="match status" value="1"/>
</dbReference>
<dbReference type="FunFam" id="2.40.128.330:FF:000001">
    <property type="entry name" value="Magnesium transporter MRS2-1"/>
    <property type="match status" value="1"/>
</dbReference>
<dbReference type="Gene3D" id="2.40.128.330">
    <property type="match status" value="1"/>
</dbReference>
<dbReference type="Gene3D" id="1.20.58.340">
    <property type="entry name" value="Magnesium transport protein CorA, transmembrane region"/>
    <property type="match status" value="1"/>
</dbReference>
<dbReference type="InterPro" id="IPR039204">
    <property type="entry name" value="MRS2-like"/>
</dbReference>
<dbReference type="PANTHER" id="PTHR13890:SF2">
    <property type="entry name" value="MAGNESIUM TRANSPORTER MRS2-4-RELATED"/>
    <property type="match status" value="1"/>
</dbReference>
<dbReference type="PANTHER" id="PTHR13890">
    <property type="entry name" value="RNA SPLICING PROTEIN MRS2, MITOCHONDRIAL"/>
    <property type="match status" value="1"/>
</dbReference>
<dbReference type="Pfam" id="PF22099">
    <property type="entry name" value="MRS2-like"/>
    <property type="match status" value="2"/>
</dbReference>
<reference key="1">
    <citation type="journal article" date="2005" name="PLoS Biol.">
        <title>The genomes of Oryza sativa: a history of duplications.</title>
        <authorList>
            <person name="Yu J."/>
            <person name="Wang J."/>
            <person name="Lin W."/>
            <person name="Li S."/>
            <person name="Li H."/>
            <person name="Zhou J."/>
            <person name="Ni P."/>
            <person name="Dong W."/>
            <person name="Hu S."/>
            <person name="Zeng C."/>
            <person name="Zhang J."/>
            <person name="Zhang Y."/>
            <person name="Li R."/>
            <person name="Xu Z."/>
            <person name="Li S."/>
            <person name="Li X."/>
            <person name="Zheng H."/>
            <person name="Cong L."/>
            <person name="Lin L."/>
            <person name="Yin J."/>
            <person name="Geng J."/>
            <person name="Li G."/>
            <person name="Shi J."/>
            <person name="Liu J."/>
            <person name="Lv H."/>
            <person name="Li J."/>
            <person name="Wang J."/>
            <person name="Deng Y."/>
            <person name="Ran L."/>
            <person name="Shi X."/>
            <person name="Wang X."/>
            <person name="Wu Q."/>
            <person name="Li C."/>
            <person name="Ren X."/>
            <person name="Wang J."/>
            <person name="Wang X."/>
            <person name="Li D."/>
            <person name="Liu D."/>
            <person name="Zhang X."/>
            <person name="Ji Z."/>
            <person name="Zhao W."/>
            <person name="Sun Y."/>
            <person name="Zhang Z."/>
            <person name="Bao J."/>
            <person name="Han Y."/>
            <person name="Dong L."/>
            <person name="Ji J."/>
            <person name="Chen P."/>
            <person name="Wu S."/>
            <person name="Liu J."/>
            <person name="Xiao Y."/>
            <person name="Bu D."/>
            <person name="Tan J."/>
            <person name="Yang L."/>
            <person name="Ye C."/>
            <person name="Zhang J."/>
            <person name="Xu J."/>
            <person name="Zhou Y."/>
            <person name="Yu Y."/>
            <person name="Zhang B."/>
            <person name="Zhuang S."/>
            <person name="Wei H."/>
            <person name="Liu B."/>
            <person name="Lei M."/>
            <person name="Yu H."/>
            <person name="Li Y."/>
            <person name="Xu H."/>
            <person name="Wei S."/>
            <person name="He X."/>
            <person name="Fang L."/>
            <person name="Zhang Z."/>
            <person name="Zhang Y."/>
            <person name="Huang X."/>
            <person name="Su Z."/>
            <person name="Tong W."/>
            <person name="Li J."/>
            <person name="Tong Z."/>
            <person name="Li S."/>
            <person name="Ye J."/>
            <person name="Wang L."/>
            <person name="Fang L."/>
            <person name="Lei T."/>
            <person name="Chen C.-S."/>
            <person name="Chen H.-C."/>
            <person name="Xu Z."/>
            <person name="Li H."/>
            <person name="Huang H."/>
            <person name="Zhang F."/>
            <person name="Xu H."/>
            <person name="Li N."/>
            <person name="Zhao C."/>
            <person name="Li S."/>
            <person name="Dong L."/>
            <person name="Huang Y."/>
            <person name="Li L."/>
            <person name="Xi Y."/>
            <person name="Qi Q."/>
            <person name="Li W."/>
            <person name="Zhang B."/>
            <person name="Hu W."/>
            <person name="Zhang Y."/>
            <person name="Tian X."/>
            <person name="Jiao Y."/>
            <person name="Liang X."/>
            <person name="Jin J."/>
            <person name="Gao L."/>
            <person name="Zheng W."/>
            <person name="Hao B."/>
            <person name="Liu S.-M."/>
            <person name="Wang W."/>
            <person name="Yuan L."/>
            <person name="Cao M."/>
            <person name="McDermott J."/>
            <person name="Samudrala R."/>
            <person name="Wang J."/>
            <person name="Wong G.K.-S."/>
            <person name="Yang H."/>
        </authorList>
    </citation>
    <scope>NUCLEOTIDE SEQUENCE [LARGE SCALE GENOMIC DNA]</scope>
    <source>
        <strain>cv. 93-11</strain>
    </source>
</reference>
<organism>
    <name type="scientific">Oryza sativa subsp. indica</name>
    <name type="common">Rice</name>
    <dbReference type="NCBI Taxonomy" id="39946"/>
    <lineage>
        <taxon>Eukaryota</taxon>
        <taxon>Viridiplantae</taxon>
        <taxon>Streptophyta</taxon>
        <taxon>Embryophyta</taxon>
        <taxon>Tracheophyta</taxon>
        <taxon>Spermatophyta</taxon>
        <taxon>Magnoliopsida</taxon>
        <taxon>Liliopsida</taxon>
        <taxon>Poales</taxon>
        <taxon>Poaceae</taxon>
        <taxon>BOP clade</taxon>
        <taxon>Oryzoideae</taxon>
        <taxon>Oryzeae</taxon>
        <taxon>Oryzinae</taxon>
        <taxon>Oryza</taxon>
        <taxon>Oryza sativa</taxon>
    </lineage>
</organism>
<gene>
    <name type="primary">MRS2-G</name>
    <name type="ORF">OsI_34529</name>
</gene>
<protein>
    <recommendedName>
        <fullName>Putative magnesium transporter MRS2-G</fullName>
    </recommendedName>
</protein>
<feature type="chain" id="PRO_0000394278" description="Putative magnesium transporter MRS2-G">
    <location>
        <begin position="1"/>
        <end position="468"/>
    </location>
</feature>
<feature type="transmembrane region" description="Helical" evidence="2">
    <location>
        <begin position="402"/>
        <end position="422"/>
    </location>
</feature>
<feature type="transmembrane region" description="Helical" evidence="2">
    <location>
        <begin position="437"/>
        <end position="457"/>
    </location>
</feature>
<feature type="region of interest" description="Disordered" evidence="3">
    <location>
        <begin position="1"/>
        <end position="76"/>
    </location>
</feature>
<feature type="region of interest" description="Disordered" evidence="3">
    <location>
        <begin position="182"/>
        <end position="205"/>
    </location>
</feature>
<feature type="compositionally biased region" description="Low complexity" evidence="3">
    <location>
        <begin position="14"/>
        <end position="23"/>
    </location>
</feature>
<feature type="compositionally biased region" description="Low complexity" evidence="3">
    <location>
        <begin position="31"/>
        <end position="45"/>
    </location>
</feature>
<feature type="compositionally biased region" description="Pro residues" evidence="3">
    <location>
        <begin position="46"/>
        <end position="67"/>
    </location>
</feature>
<feature type="compositionally biased region" description="Basic and acidic residues" evidence="3">
    <location>
        <begin position="187"/>
        <end position="197"/>
    </location>
</feature>
<comment type="function">
    <text evidence="1">Putative magnesium transporter.</text>
</comment>
<comment type="subcellular location">
    <subcellularLocation>
        <location evidence="1">Membrane</location>
        <topology evidence="1">Multi-pass membrane protein</topology>
    </subcellularLocation>
</comment>
<comment type="similarity">
    <text evidence="4">Belongs to the CorA metal ion transporter (MIT) (TC 1.A.35.5) family.</text>
</comment>
<comment type="caution">
    <text evidence="4">Lacks the GMN motif, which is a conserved feature of the family.</text>
</comment>
<comment type="sequence caution" evidence="4">
    <conflict type="erroneous gene model prediction">
        <sequence resource="EMBL-CDS" id="EAY79401"/>
    </conflict>
</comment>
<proteinExistence type="inferred from homology"/>
<sequence length="468" mass="51631">MGRRSGGRKLPFFASNASTSSSTKRTRSARRLPSLTRPRASSSPSPASPSPPPPSASHPAPPSPPLAVSPAGAGKVGKKKAGARLWMRLDRWGVSETLHLDKGSIIRRAGLPPRDLRILGPVFSDSSSILAREKAMVINLEFIRAIVTADEILLLDPLTIDVIPFVEQLTHHLPLKNLVCGNGQPGGDDHGEKHDDSPGDQVPRLNEATGAEHELPFEFQVLELALETVCSSFDVNVSGLERRATPVLEELTKNVSTRNLDRVRTLKSDLTRLLAHVQKVRDEIEHLLDDNEDMAHLYLTRKQLQNQQVEALISSAASNSIVPGGTSLSRLNNSFRRSVSIATSMHLDNDVEDLEMLLEAYFMQLDGIRNRILSVREYIDDTEDYVNIQLDNQRNELIQLQLTLTIASFGIAVNTFIAGAFAMNIQSKLYSIDDGSFFWPFVGGTSSGCFMICIVLLWYARWKKLLGP</sequence>